<organism>
    <name type="scientific">Burkholderia cenocepacia (strain ATCC BAA-245 / DSM 16553 / LMG 16656 / NCTC 13227 / J2315 / CF5610)</name>
    <name type="common">Burkholderia cepacia (strain J2315)</name>
    <dbReference type="NCBI Taxonomy" id="216591"/>
    <lineage>
        <taxon>Bacteria</taxon>
        <taxon>Pseudomonadati</taxon>
        <taxon>Pseudomonadota</taxon>
        <taxon>Betaproteobacteria</taxon>
        <taxon>Burkholderiales</taxon>
        <taxon>Burkholderiaceae</taxon>
        <taxon>Burkholderia</taxon>
        <taxon>Burkholderia cepacia complex</taxon>
    </lineage>
</organism>
<name>RL36_BURCJ</name>
<reference key="1">
    <citation type="journal article" date="2009" name="J. Bacteriol.">
        <title>The genome of Burkholderia cenocepacia J2315, an epidemic pathogen of cystic fibrosis patients.</title>
        <authorList>
            <person name="Holden M.T."/>
            <person name="Seth-Smith H.M."/>
            <person name="Crossman L.C."/>
            <person name="Sebaihia M."/>
            <person name="Bentley S.D."/>
            <person name="Cerdeno-Tarraga A.M."/>
            <person name="Thomson N.R."/>
            <person name="Bason N."/>
            <person name="Quail M.A."/>
            <person name="Sharp S."/>
            <person name="Cherevach I."/>
            <person name="Churcher C."/>
            <person name="Goodhead I."/>
            <person name="Hauser H."/>
            <person name="Holroyd N."/>
            <person name="Mungall K."/>
            <person name="Scott P."/>
            <person name="Walker D."/>
            <person name="White B."/>
            <person name="Rose H."/>
            <person name="Iversen P."/>
            <person name="Mil-Homens D."/>
            <person name="Rocha E.P."/>
            <person name="Fialho A.M."/>
            <person name="Baldwin A."/>
            <person name="Dowson C."/>
            <person name="Barrell B.G."/>
            <person name="Govan J.R."/>
            <person name="Vandamme P."/>
            <person name="Hart C.A."/>
            <person name="Mahenthiralingam E."/>
            <person name="Parkhill J."/>
        </authorList>
    </citation>
    <scope>NUCLEOTIDE SEQUENCE [LARGE SCALE GENOMIC DNA]</scope>
    <source>
        <strain>ATCC BAA-245 / DSM 16553 / LMG 16656 / NCTC 13227 / J2315 / CF5610</strain>
    </source>
</reference>
<evidence type="ECO:0000255" key="1">
    <source>
        <dbReference type="HAMAP-Rule" id="MF_00251"/>
    </source>
</evidence>
<evidence type="ECO:0000305" key="2"/>
<gene>
    <name evidence="1" type="primary">rpmJ</name>
    <name type="ordered locus">BceJ2315_02590</name>
    <name type="ORF">BCAL0256</name>
</gene>
<comment type="similarity">
    <text evidence="1">Belongs to the bacterial ribosomal protein bL36 family.</text>
</comment>
<proteinExistence type="inferred from homology"/>
<protein>
    <recommendedName>
        <fullName evidence="1">Large ribosomal subunit protein bL36</fullName>
    </recommendedName>
    <alternativeName>
        <fullName evidence="2">50S ribosomal protein L36</fullName>
    </alternativeName>
</protein>
<feature type="chain" id="PRO_1000101009" description="Large ribosomal subunit protein bL36">
    <location>
        <begin position="1"/>
        <end position="38"/>
    </location>
</feature>
<keyword id="KW-0687">Ribonucleoprotein</keyword>
<keyword id="KW-0689">Ribosomal protein</keyword>
<dbReference type="EMBL" id="AM747720">
    <property type="protein sequence ID" value="CAR50567.1"/>
    <property type="molecule type" value="Genomic_DNA"/>
</dbReference>
<dbReference type="RefSeq" id="WP_004199844.1">
    <property type="nucleotide sequence ID" value="NC_011000.1"/>
</dbReference>
<dbReference type="SMR" id="B4E5E2"/>
<dbReference type="GeneID" id="98107138"/>
<dbReference type="KEGG" id="bcj:BCAL0256"/>
<dbReference type="eggNOG" id="COG0257">
    <property type="taxonomic scope" value="Bacteria"/>
</dbReference>
<dbReference type="HOGENOM" id="CLU_135723_6_2_4"/>
<dbReference type="BioCyc" id="BCEN216591:G1G1V-299-MONOMER"/>
<dbReference type="Proteomes" id="UP000001035">
    <property type="component" value="Chromosome 1"/>
</dbReference>
<dbReference type="GO" id="GO:0005737">
    <property type="term" value="C:cytoplasm"/>
    <property type="evidence" value="ECO:0007669"/>
    <property type="project" value="UniProtKB-ARBA"/>
</dbReference>
<dbReference type="GO" id="GO:1990904">
    <property type="term" value="C:ribonucleoprotein complex"/>
    <property type="evidence" value="ECO:0007669"/>
    <property type="project" value="UniProtKB-KW"/>
</dbReference>
<dbReference type="GO" id="GO:0005840">
    <property type="term" value="C:ribosome"/>
    <property type="evidence" value="ECO:0007669"/>
    <property type="project" value="UniProtKB-KW"/>
</dbReference>
<dbReference type="GO" id="GO:0003735">
    <property type="term" value="F:structural constituent of ribosome"/>
    <property type="evidence" value="ECO:0007669"/>
    <property type="project" value="InterPro"/>
</dbReference>
<dbReference type="GO" id="GO:0006412">
    <property type="term" value="P:translation"/>
    <property type="evidence" value="ECO:0007669"/>
    <property type="project" value="UniProtKB-UniRule"/>
</dbReference>
<dbReference type="HAMAP" id="MF_00251">
    <property type="entry name" value="Ribosomal_bL36"/>
    <property type="match status" value="1"/>
</dbReference>
<dbReference type="InterPro" id="IPR000473">
    <property type="entry name" value="Ribosomal_bL36"/>
</dbReference>
<dbReference type="InterPro" id="IPR035977">
    <property type="entry name" value="Ribosomal_bL36_sp"/>
</dbReference>
<dbReference type="NCBIfam" id="TIGR01022">
    <property type="entry name" value="rpmJ_bact"/>
    <property type="match status" value="1"/>
</dbReference>
<dbReference type="PANTHER" id="PTHR42888">
    <property type="entry name" value="50S RIBOSOMAL PROTEIN L36, CHLOROPLASTIC"/>
    <property type="match status" value="1"/>
</dbReference>
<dbReference type="PANTHER" id="PTHR42888:SF1">
    <property type="entry name" value="LARGE RIBOSOMAL SUBUNIT PROTEIN BL36C"/>
    <property type="match status" value="1"/>
</dbReference>
<dbReference type="Pfam" id="PF00444">
    <property type="entry name" value="Ribosomal_L36"/>
    <property type="match status" value="1"/>
</dbReference>
<dbReference type="SUPFAM" id="SSF57840">
    <property type="entry name" value="Ribosomal protein L36"/>
    <property type="match status" value="1"/>
</dbReference>
<dbReference type="PROSITE" id="PS00828">
    <property type="entry name" value="RIBOSOMAL_L36"/>
    <property type="match status" value="1"/>
</dbReference>
<accession>B4E5E2</accession>
<sequence>MKVMASVKRICRNCKIIKRKGVVRVICSSDPRHKQRQG</sequence>